<dbReference type="EMBL" id="AF127664">
    <property type="protein sequence ID" value="AAD20643.1"/>
    <property type="molecule type" value="mRNA"/>
</dbReference>
<dbReference type="EMBL" id="AB005239">
    <property type="protein sequence ID" value="BAB10978.1"/>
    <property type="molecule type" value="Genomic_DNA"/>
</dbReference>
<dbReference type="EMBL" id="CP002688">
    <property type="protein sequence ID" value="AED95059.1"/>
    <property type="molecule type" value="Genomic_DNA"/>
</dbReference>
<dbReference type="EMBL" id="BT006201">
    <property type="protein sequence ID" value="AAP12850.1"/>
    <property type="molecule type" value="mRNA"/>
</dbReference>
<dbReference type="EMBL" id="AY087299">
    <property type="protein sequence ID" value="AAM64851.1"/>
    <property type="molecule type" value="mRNA"/>
</dbReference>
<dbReference type="EMBL" id="AK228176">
    <property type="protein sequence ID" value="BAF00132.1"/>
    <property type="molecule type" value="mRNA"/>
</dbReference>
<dbReference type="RefSeq" id="NP_199224.1">
    <molecule id="Q9XF19-1"/>
    <property type="nucleotide sequence ID" value="NM_123778.3"/>
</dbReference>
<dbReference type="SMR" id="Q9XF19"/>
<dbReference type="BioGRID" id="19684">
    <property type="interactions" value="2"/>
</dbReference>
<dbReference type="FunCoup" id="Q9XF19">
    <property type="interactions" value="371"/>
</dbReference>
<dbReference type="IntAct" id="Q9XF19">
    <property type="interactions" value="2"/>
</dbReference>
<dbReference type="STRING" id="3702.Q9XF19"/>
<dbReference type="PaxDb" id="3702-AT5G44110.1"/>
<dbReference type="ProteomicsDB" id="244496">
    <molecule id="Q9XF19-1"/>
</dbReference>
<dbReference type="EnsemblPlants" id="AT5G44110.1">
    <molecule id="Q9XF19-1"/>
    <property type="protein sequence ID" value="AT5G44110.1"/>
    <property type="gene ID" value="AT5G44110"/>
</dbReference>
<dbReference type="GeneID" id="834434"/>
<dbReference type="Gramene" id="AT5G44110.1">
    <molecule id="Q9XF19-1"/>
    <property type="protein sequence ID" value="AT5G44110.1"/>
    <property type="gene ID" value="AT5G44110"/>
</dbReference>
<dbReference type="KEGG" id="ath:AT5G44110"/>
<dbReference type="Araport" id="AT5G44110"/>
<dbReference type="TAIR" id="AT5G44110">
    <property type="gene designation" value="ABCI21"/>
</dbReference>
<dbReference type="eggNOG" id="KOG2355">
    <property type="taxonomic scope" value="Eukaryota"/>
</dbReference>
<dbReference type="HOGENOM" id="CLU_057592_1_0_1"/>
<dbReference type="InParanoid" id="Q9XF19"/>
<dbReference type="OMA" id="WISHIAY"/>
<dbReference type="PhylomeDB" id="Q9XF19"/>
<dbReference type="PRO" id="PR:Q9XF19"/>
<dbReference type="Proteomes" id="UP000006548">
    <property type="component" value="Chromosome 5"/>
</dbReference>
<dbReference type="ExpressionAtlas" id="Q9XF19">
    <property type="expression patterns" value="baseline and differential"/>
</dbReference>
<dbReference type="GO" id="GO:0005737">
    <property type="term" value="C:cytoplasm"/>
    <property type="evidence" value="ECO:0007669"/>
    <property type="project" value="UniProtKB-SubCell"/>
</dbReference>
<dbReference type="GO" id="GO:0005524">
    <property type="term" value="F:ATP binding"/>
    <property type="evidence" value="ECO:0007669"/>
    <property type="project" value="UniProtKB-KW"/>
</dbReference>
<dbReference type="GO" id="GO:0016887">
    <property type="term" value="F:ATP hydrolysis activity"/>
    <property type="evidence" value="ECO:0007669"/>
    <property type="project" value="InterPro"/>
</dbReference>
<dbReference type="GO" id="GO:0010218">
    <property type="term" value="P:response to far red light"/>
    <property type="evidence" value="ECO:0000270"/>
    <property type="project" value="TAIR"/>
</dbReference>
<dbReference type="GO" id="GO:0010114">
    <property type="term" value="P:response to red light"/>
    <property type="evidence" value="ECO:0000270"/>
    <property type="project" value="TAIR"/>
</dbReference>
<dbReference type="FunFam" id="3.40.50.300:FF:004730">
    <property type="entry name" value="ABC transporter I family member 21"/>
    <property type="match status" value="1"/>
</dbReference>
<dbReference type="Gene3D" id="3.40.50.300">
    <property type="entry name" value="P-loop containing nucleotide triphosphate hydrolases"/>
    <property type="match status" value="2"/>
</dbReference>
<dbReference type="InterPro" id="IPR003593">
    <property type="entry name" value="AAA+_ATPase"/>
</dbReference>
<dbReference type="InterPro" id="IPR003439">
    <property type="entry name" value="ABC_transporter-like_ATP-bd"/>
</dbReference>
<dbReference type="InterPro" id="IPR027417">
    <property type="entry name" value="P-loop_NTPase"/>
</dbReference>
<dbReference type="PANTHER" id="PTHR43158">
    <property type="entry name" value="SKFA PEPTIDE EXPORT ATP-BINDING PROTEIN SKFE"/>
    <property type="match status" value="1"/>
</dbReference>
<dbReference type="PANTHER" id="PTHR43158:SF2">
    <property type="entry name" value="SKFA PEPTIDE EXPORT ATP-BINDING PROTEIN SKFE"/>
    <property type="match status" value="1"/>
</dbReference>
<dbReference type="Pfam" id="PF00005">
    <property type="entry name" value="ABC_tran"/>
    <property type="match status" value="1"/>
</dbReference>
<dbReference type="SMART" id="SM00382">
    <property type="entry name" value="AAA"/>
    <property type="match status" value="1"/>
</dbReference>
<dbReference type="SUPFAM" id="SSF52540">
    <property type="entry name" value="P-loop containing nucleoside triphosphate hydrolases"/>
    <property type="match status" value="1"/>
</dbReference>
<dbReference type="PROSITE" id="PS50893">
    <property type="entry name" value="ABC_TRANSPORTER_2"/>
    <property type="match status" value="1"/>
</dbReference>
<proteinExistence type="evidence at transcript level"/>
<sequence length="282" mass="31360">MAEKNASAVDGAIRVSGMQFSYDVQDPIFFDFNLDLPAGSRCLLVGANGSGKTTLLKILAGKHMVGGKNVVQVLDRSAFHDTELVCSGDLSYLGGSWSKTAGSAGDIPLQGDFSAEHMIFGVEGIDPFRREKLIDLLDINLQWRMHKVSDGQRRRVQICMGLLHPFKVLLLDEVTVDLDVVARMDLLEFFKEECEQRGATIVYATHIFDGLETWASHLAYINGGELKLSAKLDEIKDLKTSPNLLSVVEAWLRSETKVEKKTKKKPVVTSPFMSSRQMAYYR</sequence>
<evidence type="ECO:0000255" key="1">
    <source>
        <dbReference type="PROSITE-ProRule" id="PRU00434"/>
    </source>
</evidence>
<evidence type="ECO:0000269" key="2">
    <source ref="1"/>
</evidence>
<evidence type="ECO:0000305" key="3"/>
<comment type="subcellular location">
    <subcellularLocation>
        <location evidence="2">Cytoplasm</location>
    </subcellularLocation>
</comment>
<comment type="alternative products">
    <event type="alternative splicing"/>
    <isoform>
        <id>Q9XF19-1</id>
        <name>1</name>
        <sequence type="displayed"/>
    </isoform>
    <text>A number of isoforms are produced. According to EST sequences.</text>
</comment>
<comment type="tissue specificity">
    <text evidence="2">Expressed in root elongating zone and root meristem, as well as in elongating etiolated hypocotyls.</text>
</comment>
<comment type="induction">
    <text evidence="2">By sucrose.</text>
</comment>
<comment type="similarity">
    <text evidence="3">Belongs to the ABC transporter superfamily. ABCI family.</text>
</comment>
<gene>
    <name type="primary">ABCI21</name>
    <name type="synonym">NAP2</name>
    <name type="synonym">POP1</name>
    <name type="ordered locus">At5g44110</name>
    <name type="ORF">MLN1.3</name>
</gene>
<reference key="1">
    <citation type="journal article" date="2006" name="Plant Sci.">
        <title>Molecular characterization of three Arabidopsis soluble ABC proteins which expression is induced by sugars.</title>
        <authorList>
            <person name="Marin E."/>
            <person name="Divol F."/>
            <person name="Bechtold N."/>
            <person name="Vavasseur A."/>
            <person name="Nussaume L."/>
            <person name="Forestier C."/>
        </authorList>
        <dbReference type="AGRICOLA" id="IND43814144"/>
    </citation>
    <scope>NUCLEOTIDE SEQUENCE [MRNA] (ISOFORM 1)</scope>
    <scope>INDUCTION</scope>
    <scope>TISSUE SPECIFICITY</scope>
    <scope>SUBCELLULAR LOCATION</scope>
    <source>
        <strain>cv. Wassilewskija</strain>
    </source>
</reference>
<reference key="2">
    <citation type="journal article" date="1997" name="DNA Res.">
        <title>Structural analysis of Arabidopsis thaliana chromosome 5. I. Sequence features of the 1.6 Mb regions covered by twenty physically assigned P1 clones.</title>
        <authorList>
            <person name="Sato S."/>
            <person name="Kotani H."/>
            <person name="Nakamura Y."/>
            <person name="Kaneko T."/>
            <person name="Asamizu E."/>
            <person name="Fukami M."/>
            <person name="Miyajima N."/>
            <person name="Tabata S."/>
        </authorList>
    </citation>
    <scope>NUCLEOTIDE SEQUENCE [LARGE SCALE GENOMIC DNA]</scope>
    <source>
        <strain>cv. Columbia</strain>
    </source>
</reference>
<reference key="3">
    <citation type="journal article" date="2017" name="Plant J.">
        <title>Araport11: a complete reannotation of the Arabidopsis thaliana reference genome.</title>
        <authorList>
            <person name="Cheng C.Y."/>
            <person name="Krishnakumar V."/>
            <person name="Chan A.P."/>
            <person name="Thibaud-Nissen F."/>
            <person name="Schobel S."/>
            <person name="Town C.D."/>
        </authorList>
    </citation>
    <scope>GENOME REANNOTATION</scope>
    <source>
        <strain>cv. Columbia</strain>
    </source>
</reference>
<reference key="4">
    <citation type="journal article" date="2003" name="Science">
        <title>Empirical analysis of transcriptional activity in the Arabidopsis genome.</title>
        <authorList>
            <person name="Yamada K."/>
            <person name="Lim J."/>
            <person name="Dale J.M."/>
            <person name="Chen H."/>
            <person name="Shinn P."/>
            <person name="Palm C.J."/>
            <person name="Southwick A.M."/>
            <person name="Wu H.C."/>
            <person name="Kim C.J."/>
            <person name="Nguyen M."/>
            <person name="Pham P.K."/>
            <person name="Cheuk R.F."/>
            <person name="Karlin-Newmann G."/>
            <person name="Liu S.X."/>
            <person name="Lam B."/>
            <person name="Sakano H."/>
            <person name="Wu T."/>
            <person name="Yu G."/>
            <person name="Miranda M."/>
            <person name="Quach H.L."/>
            <person name="Tripp M."/>
            <person name="Chang C.H."/>
            <person name="Lee J.M."/>
            <person name="Toriumi M.J."/>
            <person name="Chan M.M."/>
            <person name="Tang C.C."/>
            <person name="Onodera C.S."/>
            <person name="Deng J.M."/>
            <person name="Akiyama K."/>
            <person name="Ansari Y."/>
            <person name="Arakawa T."/>
            <person name="Banh J."/>
            <person name="Banno F."/>
            <person name="Bowser L."/>
            <person name="Brooks S.Y."/>
            <person name="Carninci P."/>
            <person name="Chao Q."/>
            <person name="Choy N."/>
            <person name="Enju A."/>
            <person name="Goldsmith A.D."/>
            <person name="Gurjal M."/>
            <person name="Hansen N.F."/>
            <person name="Hayashizaki Y."/>
            <person name="Johnson-Hopson C."/>
            <person name="Hsuan V.W."/>
            <person name="Iida K."/>
            <person name="Karnes M."/>
            <person name="Khan S."/>
            <person name="Koesema E."/>
            <person name="Ishida J."/>
            <person name="Jiang P.X."/>
            <person name="Jones T."/>
            <person name="Kawai J."/>
            <person name="Kamiya A."/>
            <person name="Meyers C."/>
            <person name="Nakajima M."/>
            <person name="Narusaka M."/>
            <person name="Seki M."/>
            <person name="Sakurai T."/>
            <person name="Satou M."/>
            <person name="Tamse R."/>
            <person name="Vaysberg M."/>
            <person name="Wallender E.K."/>
            <person name="Wong C."/>
            <person name="Yamamura Y."/>
            <person name="Yuan S."/>
            <person name="Shinozaki K."/>
            <person name="Davis R.W."/>
            <person name="Theologis A."/>
            <person name="Ecker J.R."/>
        </authorList>
    </citation>
    <scope>NUCLEOTIDE SEQUENCE [LARGE SCALE MRNA] (ISOFORM 1)</scope>
    <source>
        <strain>cv. Columbia</strain>
    </source>
</reference>
<reference key="5">
    <citation type="submission" date="2002-03" db="EMBL/GenBank/DDBJ databases">
        <title>Full-length cDNA from Arabidopsis thaliana.</title>
        <authorList>
            <person name="Brover V.V."/>
            <person name="Troukhan M.E."/>
            <person name="Alexandrov N.A."/>
            <person name="Lu Y.-P."/>
            <person name="Flavell R.B."/>
            <person name="Feldmann K.A."/>
        </authorList>
    </citation>
    <scope>NUCLEOTIDE SEQUENCE [LARGE SCALE MRNA] (ISOFORM 1)</scope>
</reference>
<reference key="6">
    <citation type="submission" date="2006-07" db="EMBL/GenBank/DDBJ databases">
        <title>Large-scale analysis of RIKEN Arabidopsis full-length (RAFL) cDNAs.</title>
        <authorList>
            <person name="Totoki Y."/>
            <person name="Seki M."/>
            <person name="Ishida J."/>
            <person name="Nakajima M."/>
            <person name="Enju A."/>
            <person name="Kamiya A."/>
            <person name="Narusaka M."/>
            <person name="Shin-i T."/>
            <person name="Nakagawa M."/>
            <person name="Sakamoto N."/>
            <person name="Oishi K."/>
            <person name="Kohara Y."/>
            <person name="Kobayashi M."/>
            <person name="Toyoda A."/>
            <person name="Sakaki Y."/>
            <person name="Sakurai T."/>
            <person name="Iida K."/>
            <person name="Akiyama K."/>
            <person name="Satou M."/>
            <person name="Toyoda T."/>
            <person name="Konagaya A."/>
            <person name="Carninci P."/>
            <person name="Kawai J."/>
            <person name="Hayashizaki Y."/>
            <person name="Shinozaki K."/>
        </authorList>
    </citation>
    <scope>NUCLEOTIDE SEQUENCE [LARGE SCALE MRNA]</scope>
    <source>
        <strain>cv. Columbia</strain>
    </source>
</reference>
<reference key="7">
    <citation type="journal article" date="2001" name="J. Biol. Chem.">
        <title>The Arabidopsis thaliana ABC protein superfamily, a complete inventory.</title>
        <authorList>
            <person name="Sanchez-Fernandez R."/>
            <person name="Davies T.G."/>
            <person name="Coleman J.O."/>
            <person name="Rea P.A."/>
        </authorList>
    </citation>
    <scope>GENE FAMILY</scope>
    <scope>NOMENCLATURE</scope>
</reference>
<reference key="8">
    <citation type="journal article" date="2008" name="Trends Plant Sci.">
        <title>Plant ABC proteins - a unified nomenclature and updated inventory.</title>
        <authorList>
            <person name="Verrier P.J."/>
            <person name="Bird D."/>
            <person name="Burla B."/>
            <person name="Dassa E."/>
            <person name="Forestier C."/>
            <person name="Geisler M."/>
            <person name="Klein M."/>
            <person name="Kolukisaoglu H.U."/>
            <person name="Lee Y."/>
            <person name="Martinoia E."/>
            <person name="Murphy A."/>
            <person name="Rea P.A."/>
            <person name="Samuels L."/>
            <person name="Schulz B."/>
            <person name="Spalding E.J."/>
            <person name="Yazaki K."/>
            <person name="Theodoulou F.L."/>
        </authorList>
    </citation>
    <scope>GENE FAMILY</scope>
    <scope>NOMENCLATURE</scope>
</reference>
<accession>Q9XF19</accession>
<accession>Q8LBC2</accession>
<protein>
    <recommendedName>
        <fullName>ABC transporter I family member 21</fullName>
        <shortName>ABC transporter ABCI.21</shortName>
        <shortName>AtABCI21</shortName>
    </recommendedName>
    <alternativeName>
        <fullName>GCN-related protein 1</fullName>
    </alternativeName>
    <alternativeName>
        <fullName>Non-intrinsic ABC protein 2</fullName>
    </alternativeName>
</protein>
<organism>
    <name type="scientific">Arabidopsis thaliana</name>
    <name type="common">Mouse-ear cress</name>
    <dbReference type="NCBI Taxonomy" id="3702"/>
    <lineage>
        <taxon>Eukaryota</taxon>
        <taxon>Viridiplantae</taxon>
        <taxon>Streptophyta</taxon>
        <taxon>Embryophyta</taxon>
        <taxon>Tracheophyta</taxon>
        <taxon>Spermatophyta</taxon>
        <taxon>Magnoliopsida</taxon>
        <taxon>eudicotyledons</taxon>
        <taxon>Gunneridae</taxon>
        <taxon>Pentapetalae</taxon>
        <taxon>rosids</taxon>
        <taxon>malvids</taxon>
        <taxon>Brassicales</taxon>
        <taxon>Brassicaceae</taxon>
        <taxon>Camelineae</taxon>
        <taxon>Arabidopsis</taxon>
    </lineage>
</organism>
<feature type="chain" id="PRO_0000250654" description="ABC transporter I family member 21">
    <location>
        <begin position="1"/>
        <end position="282"/>
    </location>
</feature>
<feature type="domain" description="ABC transporter" evidence="1">
    <location>
        <begin position="13"/>
        <end position="248"/>
    </location>
</feature>
<feature type="binding site" evidence="1">
    <location>
        <begin position="46"/>
        <end position="53"/>
    </location>
    <ligand>
        <name>ATP</name>
        <dbReference type="ChEBI" id="CHEBI:30616"/>
    </ligand>
</feature>
<keyword id="KW-0025">Alternative splicing</keyword>
<keyword id="KW-0067">ATP-binding</keyword>
<keyword id="KW-0963">Cytoplasm</keyword>
<keyword id="KW-0547">Nucleotide-binding</keyword>
<keyword id="KW-1185">Reference proteome</keyword>
<keyword id="KW-0813">Transport</keyword>
<name>AB21I_ARATH</name>